<proteinExistence type="inferred from homology"/>
<feature type="chain" id="PRO_0000251651" description="Large ribosomal subunit protein uL16">
    <location>
        <begin position="1"/>
        <end position="138"/>
    </location>
</feature>
<feature type="region of interest" description="Disordered" evidence="2">
    <location>
        <begin position="1"/>
        <end position="22"/>
    </location>
</feature>
<feature type="compositionally biased region" description="Basic residues" evidence="2">
    <location>
        <begin position="7"/>
        <end position="17"/>
    </location>
</feature>
<keyword id="KW-1185">Reference proteome</keyword>
<keyword id="KW-0687">Ribonucleoprotein</keyword>
<keyword id="KW-0689">Ribosomal protein</keyword>
<keyword id="KW-0694">RNA-binding</keyword>
<keyword id="KW-0699">rRNA-binding</keyword>
<keyword id="KW-0820">tRNA-binding</keyword>
<sequence length="138" mass="15443">MQQPARTKYRKQQKGRNKGIATRGAKVSFGEYGLKAVGRGRLTARQIEAARRAMTRHIKRGGRIWIRIFPDKPISHKPAEVRMGNGKGNPEYFVAEIQPGKVLYEMDGVDEVLARQAFRLAAAKLPILTTFVVRQVGG</sequence>
<accession>Q2YAZ0</accession>
<evidence type="ECO:0000255" key="1">
    <source>
        <dbReference type="HAMAP-Rule" id="MF_01342"/>
    </source>
</evidence>
<evidence type="ECO:0000256" key="2">
    <source>
        <dbReference type="SAM" id="MobiDB-lite"/>
    </source>
</evidence>
<evidence type="ECO:0000305" key="3"/>
<comment type="function">
    <text evidence="1">Binds 23S rRNA and is also seen to make contacts with the A and possibly P site tRNAs.</text>
</comment>
<comment type="subunit">
    <text evidence="1">Part of the 50S ribosomal subunit.</text>
</comment>
<comment type="similarity">
    <text evidence="1">Belongs to the universal ribosomal protein uL16 family.</text>
</comment>
<protein>
    <recommendedName>
        <fullName evidence="1">Large ribosomal subunit protein uL16</fullName>
    </recommendedName>
    <alternativeName>
        <fullName evidence="3">50S ribosomal protein L16</fullName>
    </alternativeName>
</protein>
<reference key="1">
    <citation type="submission" date="2005-08" db="EMBL/GenBank/DDBJ databases">
        <title>Complete sequence of chromosome 1 of Nitrosospira multiformis ATCC 25196.</title>
        <authorList>
            <person name="Copeland A."/>
            <person name="Lucas S."/>
            <person name="Lapidus A."/>
            <person name="Barry K."/>
            <person name="Detter J.C."/>
            <person name="Glavina T."/>
            <person name="Hammon N."/>
            <person name="Israni S."/>
            <person name="Pitluck S."/>
            <person name="Chain P."/>
            <person name="Malfatti S."/>
            <person name="Shin M."/>
            <person name="Vergez L."/>
            <person name="Schmutz J."/>
            <person name="Larimer F."/>
            <person name="Land M."/>
            <person name="Hauser L."/>
            <person name="Kyrpides N."/>
            <person name="Lykidis A."/>
            <person name="Richardson P."/>
        </authorList>
    </citation>
    <scope>NUCLEOTIDE SEQUENCE [LARGE SCALE GENOMIC DNA]</scope>
    <source>
        <strain>ATCC 25196 / NCIMB 11849 / C 71</strain>
    </source>
</reference>
<organism>
    <name type="scientific">Nitrosospira multiformis (strain ATCC 25196 / NCIMB 11849 / C 71)</name>
    <dbReference type="NCBI Taxonomy" id="323848"/>
    <lineage>
        <taxon>Bacteria</taxon>
        <taxon>Pseudomonadati</taxon>
        <taxon>Pseudomonadota</taxon>
        <taxon>Betaproteobacteria</taxon>
        <taxon>Nitrosomonadales</taxon>
        <taxon>Nitrosomonadaceae</taxon>
        <taxon>Nitrosospira</taxon>
    </lineage>
</organism>
<gene>
    <name evidence="1" type="primary">rplP</name>
    <name type="ordered locus">Nmul_A0774</name>
</gene>
<name>RL16_NITMU</name>
<dbReference type="EMBL" id="CP000103">
    <property type="protein sequence ID" value="ABB74081.1"/>
    <property type="molecule type" value="Genomic_DNA"/>
</dbReference>
<dbReference type="RefSeq" id="WP_011380130.1">
    <property type="nucleotide sequence ID" value="NC_007614.1"/>
</dbReference>
<dbReference type="SMR" id="Q2YAZ0"/>
<dbReference type="STRING" id="323848.Nmul_A0774"/>
<dbReference type="KEGG" id="nmu:Nmul_A0774"/>
<dbReference type="eggNOG" id="COG0197">
    <property type="taxonomic scope" value="Bacteria"/>
</dbReference>
<dbReference type="HOGENOM" id="CLU_078858_2_1_4"/>
<dbReference type="OrthoDB" id="9802589at2"/>
<dbReference type="Proteomes" id="UP000002718">
    <property type="component" value="Chromosome"/>
</dbReference>
<dbReference type="GO" id="GO:0022625">
    <property type="term" value="C:cytosolic large ribosomal subunit"/>
    <property type="evidence" value="ECO:0007669"/>
    <property type="project" value="TreeGrafter"/>
</dbReference>
<dbReference type="GO" id="GO:0019843">
    <property type="term" value="F:rRNA binding"/>
    <property type="evidence" value="ECO:0007669"/>
    <property type="project" value="UniProtKB-UniRule"/>
</dbReference>
<dbReference type="GO" id="GO:0003735">
    <property type="term" value="F:structural constituent of ribosome"/>
    <property type="evidence" value="ECO:0007669"/>
    <property type="project" value="InterPro"/>
</dbReference>
<dbReference type="GO" id="GO:0000049">
    <property type="term" value="F:tRNA binding"/>
    <property type="evidence" value="ECO:0007669"/>
    <property type="project" value="UniProtKB-KW"/>
</dbReference>
<dbReference type="GO" id="GO:0006412">
    <property type="term" value="P:translation"/>
    <property type="evidence" value="ECO:0007669"/>
    <property type="project" value="UniProtKB-UniRule"/>
</dbReference>
<dbReference type="CDD" id="cd01433">
    <property type="entry name" value="Ribosomal_L16_L10e"/>
    <property type="match status" value="1"/>
</dbReference>
<dbReference type="FunFam" id="3.90.1170.10:FF:000001">
    <property type="entry name" value="50S ribosomal protein L16"/>
    <property type="match status" value="1"/>
</dbReference>
<dbReference type="Gene3D" id="3.90.1170.10">
    <property type="entry name" value="Ribosomal protein L10e/L16"/>
    <property type="match status" value="1"/>
</dbReference>
<dbReference type="HAMAP" id="MF_01342">
    <property type="entry name" value="Ribosomal_uL16"/>
    <property type="match status" value="1"/>
</dbReference>
<dbReference type="InterPro" id="IPR047873">
    <property type="entry name" value="Ribosomal_uL16"/>
</dbReference>
<dbReference type="InterPro" id="IPR000114">
    <property type="entry name" value="Ribosomal_uL16_bact-type"/>
</dbReference>
<dbReference type="InterPro" id="IPR020798">
    <property type="entry name" value="Ribosomal_uL16_CS"/>
</dbReference>
<dbReference type="InterPro" id="IPR016180">
    <property type="entry name" value="Ribosomal_uL16_dom"/>
</dbReference>
<dbReference type="InterPro" id="IPR036920">
    <property type="entry name" value="Ribosomal_uL16_sf"/>
</dbReference>
<dbReference type="NCBIfam" id="TIGR01164">
    <property type="entry name" value="rplP_bact"/>
    <property type="match status" value="1"/>
</dbReference>
<dbReference type="PANTHER" id="PTHR12220">
    <property type="entry name" value="50S/60S RIBOSOMAL PROTEIN L16"/>
    <property type="match status" value="1"/>
</dbReference>
<dbReference type="PANTHER" id="PTHR12220:SF13">
    <property type="entry name" value="LARGE RIBOSOMAL SUBUNIT PROTEIN UL16M"/>
    <property type="match status" value="1"/>
</dbReference>
<dbReference type="Pfam" id="PF00252">
    <property type="entry name" value="Ribosomal_L16"/>
    <property type="match status" value="1"/>
</dbReference>
<dbReference type="PRINTS" id="PR00060">
    <property type="entry name" value="RIBOSOMALL16"/>
</dbReference>
<dbReference type="SUPFAM" id="SSF54686">
    <property type="entry name" value="Ribosomal protein L16p/L10e"/>
    <property type="match status" value="1"/>
</dbReference>
<dbReference type="PROSITE" id="PS00586">
    <property type="entry name" value="RIBOSOMAL_L16_1"/>
    <property type="match status" value="1"/>
</dbReference>
<dbReference type="PROSITE" id="PS00701">
    <property type="entry name" value="RIBOSOMAL_L16_2"/>
    <property type="match status" value="1"/>
</dbReference>